<keyword id="KW-1185">Reference proteome</keyword>
<keyword id="KW-0687">Ribonucleoprotein</keyword>
<keyword id="KW-0689">Ribosomal protein</keyword>
<organism>
    <name type="scientific">Bombyx mori</name>
    <name type="common">Silk moth</name>
    <dbReference type="NCBI Taxonomy" id="7091"/>
    <lineage>
        <taxon>Eukaryota</taxon>
        <taxon>Metazoa</taxon>
        <taxon>Ecdysozoa</taxon>
        <taxon>Arthropoda</taxon>
        <taxon>Hexapoda</taxon>
        <taxon>Insecta</taxon>
        <taxon>Pterygota</taxon>
        <taxon>Neoptera</taxon>
        <taxon>Endopterygota</taxon>
        <taxon>Lepidoptera</taxon>
        <taxon>Glossata</taxon>
        <taxon>Ditrysia</taxon>
        <taxon>Bombycoidea</taxon>
        <taxon>Bombycidae</taxon>
        <taxon>Bombycinae</taxon>
        <taxon>Bombyx</taxon>
    </lineage>
</organism>
<evidence type="ECO:0000305" key="1"/>
<name>RL38_BOMMO</name>
<proteinExistence type="inferred from homology"/>
<feature type="chain" id="PRO_0000319556" description="Large ribosomal subunit protein eL38">
    <location>
        <begin position="1"/>
        <end position="70"/>
    </location>
</feature>
<protein>
    <recommendedName>
        <fullName evidence="1">Large ribosomal subunit protein eL38</fullName>
    </recommendedName>
    <alternativeName>
        <fullName>60S ribosomal protein L38</fullName>
    </alternativeName>
</protein>
<reference key="1">
    <citation type="submission" date="2004-09" db="EMBL/GenBank/DDBJ databases">
        <title>Ribosomal proteins of Bombyx mori.</title>
        <authorList>
            <person name="Heckel D.G."/>
            <person name="Morgan M."/>
            <person name="Shimada T."/>
            <person name="Mita K."/>
        </authorList>
    </citation>
    <scope>NUCLEOTIDE SEQUENCE [MRNA]</scope>
    <source>
        <strain>C108</strain>
    </source>
</reference>
<sequence length="70" mass="8241">MPREIKDIKDFLIKARRKDAKSVKIKKNPENVKFKVRCSRFLYTLVITDKEKAEKLKQSLPPGLQVKEVK</sequence>
<gene>
    <name type="primary">RpL38</name>
</gene>
<accession>Q5UAP8</accession>
<comment type="similarity">
    <text evidence="1">Belongs to the eukaryotic ribosomal protein eL38 family.</text>
</comment>
<dbReference type="EMBL" id="AY769310">
    <property type="protein sequence ID" value="AAV34852.1"/>
    <property type="molecule type" value="mRNA"/>
</dbReference>
<dbReference type="RefSeq" id="NP_001037554.1">
    <property type="nucleotide sequence ID" value="NM_001044089.1"/>
</dbReference>
<dbReference type="RefSeq" id="XP_012545585.1">
    <property type="nucleotide sequence ID" value="XM_012690131.4"/>
</dbReference>
<dbReference type="SMR" id="Q5UAP8"/>
<dbReference type="FunCoup" id="Q5UAP8">
    <property type="interactions" value="980"/>
</dbReference>
<dbReference type="STRING" id="7091.Q5UAP8"/>
<dbReference type="PaxDb" id="7091-BGIBMGA005684-TA"/>
<dbReference type="EnsemblMetazoa" id="NM_001044089.1">
    <property type="protein sequence ID" value="NP_001037554.1"/>
    <property type="gene ID" value="GeneID_693118"/>
</dbReference>
<dbReference type="EnsemblMetazoa" id="XM_012690131.3">
    <property type="protein sequence ID" value="XP_012545585.1"/>
    <property type="gene ID" value="GeneID_693118"/>
</dbReference>
<dbReference type="GeneID" id="693118"/>
<dbReference type="KEGG" id="bmor:693118"/>
<dbReference type="CTD" id="6169"/>
<dbReference type="eggNOG" id="KOG3499">
    <property type="taxonomic scope" value="Eukaryota"/>
</dbReference>
<dbReference type="HOGENOM" id="CLU_152057_2_0_1"/>
<dbReference type="InParanoid" id="Q5UAP8"/>
<dbReference type="OrthoDB" id="540698at7088"/>
<dbReference type="Proteomes" id="UP000005204">
    <property type="component" value="Unassembled WGS sequence"/>
</dbReference>
<dbReference type="GO" id="GO:0022625">
    <property type="term" value="C:cytosolic large ribosomal subunit"/>
    <property type="evidence" value="ECO:0007669"/>
    <property type="project" value="TreeGrafter"/>
</dbReference>
<dbReference type="GO" id="GO:0003735">
    <property type="term" value="F:structural constituent of ribosome"/>
    <property type="evidence" value="ECO:0007669"/>
    <property type="project" value="InterPro"/>
</dbReference>
<dbReference type="GO" id="GO:0022618">
    <property type="term" value="P:protein-RNA complex assembly"/>
    <property type="evidence" value="ECO:0007669"/>
    <property type="project" value="TreeGrafter"/>
</dbReference>
<dbReference type="GO" id="GO:0006412">
    <property type="term" value="P:translation"/>
    <property type="evidence" value="ECO:0007669"/>
    <property type="project" value="InterPro"/>
</dbReference>
<dbReference type="FunFam" id="3.30.720.90:FF:000001">
    <property type="entry name" value="60S ribosomal protein L38"/>
    <property type="match status" value="1"/>
</dbReference>
<dbReference type="Gene3D" id="3.30.720.90">
    <property type="match status" value="1"/>
</dbReference>
<dbReference type="InterPro" id="IPR002675">
    <property type="entry name" value="Ribosomal_eL38"/>
</dbReference>
<dbReference type="InterPro" id="IPR038464">
    <property type="entry name" value="Ribosomal_eL38_sf"/>
</dbReference>
<dbReference type="PANTHER" id="PTHR10965">
    <property type="entry name" value="60S RIBOSOMAL PROTEIN L38"/>
    <property type="match status" value="1"/>
</dbReference>
<dbReference type="PANTHER" id="PTHR10965:SF0">
    <property type="entry name" value="LARGE RIBOSOMAL SUBUNIT PROTEIN EL38"/>
    <property type="match status" value="1"/>
</dbReference>
<dbReference type="Pfam" id="PF01781">
    <property type="entry name" value="Ribosomal_L38e"/>
    <property type="match status" value="1"/>
</dbReference>